<name>GPBAR_HUMAN</name>
<keyword id="KW-0002">3D-structure</keyword>
<keyword id="KW-1003">Cell membrane</keyword>
<keyword id="KW-1015">Disulfide bond</keyword>
<keyword id="KW-0297">G-protein coupled receptor</keyword>
<keyword id="KW-0325">Glycoprotein</keyword>
<keyword id="KW-0472">Membrane</keyword>
<keyword id="KW-1267">Proteomics identification</keyword>
<keyword id="KW-0675">Receptor</keyword>
<keyword id="KW-1185">Reference proteome</keyword>
<keyword id="KW-0807">Transducer</keyword>
<keyword id="KW-0812">Transmembrane</keyword>
<keyword id="KW-1133">Transmembrane helix</keyword>
<gene>
    <name type="primary">GPBAR1</name>
    <name type="synonym">TGR5</name>
</gene>
<organism>
    <name type="scientific">Homo sapiens</name>
    <name type="common">Human</name>
    <dbReference type="NCBI Taxonomy" id="9606"/>
    <lineage>
        <taxon>Eukaryota</taxon>
        <taxon>Metazoa</taxon>
        <taxon>Chordata</taxon>
        <taxon>Craniata</taxon>
        <taxon>Vertebrata</taxon>
        <taxon>Euteleostomi</taxon>
        <taxon>Mammalia</taxon>
        <taxon>Eutheria</taxon>
        <taxon>Euarchontoglires</taxon>
        <taxon>Primates</taxon>
        <taxon>Haplorrhini</taxon>
        <taxon>Catarrhini</taxon>
        <taxon>Hominidae</taxon>
        <taxon>Homo</taxon>
    </lineage>
</organism>
<feature type="chain" id="PRO_0000069500" description="G-protein coupled bile acid receptor 1">
    <location>
        <begin position="1"/>
        <end position="330"/>
    </location>
</feature>
<feature type="topological domain" description="Extracellular" evidence="1">
    <location>
        <begin position="1"/>
        <end position="19"/>
    </location>
</feature>
<feature type="transmembrane region" description="Helical; Name=1" evidence="1">
    <location>
        <begin position="20"/>
        <end position="40"/>
    </location>
</feature>
<feature type="topological domain" description="Cytoplasmic" evidence="1">
    <location>
        <begin position="41"/>
        <end position="50"/>
    </location>
</feature>
<feature type="transmembrane region" description="Helical; Name=2" evidence="1">
    <location>
        <begin position="51"/>
        <end position="71"/>
    </location>
</feature>
<feature type="topological domain" description="Extracellular" evidence="1">
    <location>
        <begin position="72"/>
        <end position="85"/>
    </location>
</feature>
<feature type="transmembrane region" description="Helical; Name=3" evidence="1">
    <location>
        <begin position="86"/>
        <end position="106"/>
    </location>
</feature>
<feature type="topological domain" description="Cytoplasmic" evidence="1">
    <location>
        <begin position="107"/>
        <end position="125"/>
    </location>
</feature>
<feature type="transmembrane region" description="Helical; Name=4" evidence="1">
    <location>
        <begin position="126"/>
        <end position="146"/>
    </location>
</feature>
<feature type="topological domain" description="Extracellular" evidence="1">
    <location>
        <begin position="147"/>
        <end position="165"/>
    </location>
</feature>
<feature type="transmembrane region" description="Helical; Name=5" evidence="1">
    <location>
        <begin position="166"/>
        <end position="186"/>
    </location>
</feature>
<feature type="topological domain" description="Cytoplasmic" evidence="1">
    <location>
        <begin position="187"/>
        <end position="228"/>
    </location>
</feature>
<feature type="transmembrane region" description="Helical; Name=6" evidence="1">
    <location>
        <begin position="229"/>
        <end position="249"/>
    </location>
</feature>
<feature type="topological domain" description="Extracellular" evidence="1">
    <location>
        <begin position="250"/>
        <end position="261"/>
    </location>
</feature>
<feature type="transmembrane region" description="Helical; Name=7" evidence="1">
    <location>
        <begin position="262"/>
        <end position="282"/>
    </location>
</feature>
<feature type="topological domain" description="Cytoplasmic" evidence="1">
    <location>
        <begin position="283"/>
        <end position="330"/>
    </location>
</feature>
<feature type="region of interest" description="Disordered" evidence="3">
    <location>
        <begin position="309"/>
        <end position="330"/>
    </location>
</feature>
<feature type="compositionally biased region" description="Polar residues" evidence="3">
    <location>
        <begin position="319"/>
        <end position="330"/>
    </location>
</feature>
<feature type="glycosylation site" description="N-linked (GlcNAc...) asparagine" evidence="1">
    <location>
        <position position="4"/>
    </location>
</feature>
<feature type="glycosylation site" description="N-linked (GlcNAc...) asparagine" evidence="1">
    <location>
        <position position="76"/>
    </location>
</feature>
<feature type="disulfide bond" evidence="2">
    <location>
        <begin position="85"/>
        <end position="155"/>
    </location>
</feature>
<feature type="helix" evidence="8">
    <location>
        <begin position="21"/>
        <end position="41"/>
    </location>
</feature>
<feature type="turn" evidence="8">
    <location>
        <begin position="42"/>
        <end position="46"/>
    </location>
</feature>
<feature type="helix" evidence="8">
    <location>
        <begin position="49"/>
        <end position="67"/>
    </location>
</feature>
<feature type="helix" evidence="8">
    <location>
        <begin position="68"/>
        <end position="70"/>
    </location>
</feature>
<feature type="helix" evidence="8">
    <location>
        <begin position="71"/>
        <end position="74"/>
    </location>
</feature>
<feature type="helix" evidence="8">
    <location>
        <begin position="82"/>
        <end position="115"/>
    </location>
</feature>
<feature type="helix" evidence="8">
    <location>
        <begin position="124"/>
        <end position="139"/>
    </location>
</feature>
<feature type="helix" evidence="8">
    <location>
        <begin position="140"/>
        <end position="143"/>
    </location>
</feature>
<feature type="strand" evidence="7">
    <location>
        <begin position="151"/>
        <end position="153"/>
    </location>
</feature>
<feature type="helix" evidence="8">
    <location>
        <begin position="157"/>
        <end position="160"/>
    </location>
</feature>
<feature type="helix" evidence="8">
    <location>
        <begin position="163"/>
        <end position="172"/>
    </location>
</feature>
<feature type="helix" evidence="8">
    <location>
        <begin position="174"/>
        <end position="206"/>
    </location>
</feature>
<feature type="helix" evidence="8">
    <location>
        <begin position="213"/>
        <end position="234"/>
    </location>
</feature>
<feature type="helix" evidence="8">
    <location>
        <begin position="237"/>
        <end position="251"/>
    </location>
</feature>
<feature type="strand" evidence="7">
    <location>
        <begin position="252"/>
        <end position="254"/>
    </location>
</feature>
<feature type="strand" evidence="7">
    <location>
        <begin position="256"/>
        <end position="258"/>
    </location>
</feature>
<feature type="helix" evidence="8">
    <location>
        <begin position="261"/>
        <end position="274"/>
    </location>
</feature>
<feature type="helix" evidence="8">
    <location>
        <begin position="276"/>
        <end position="283"/>
    </location>
</feature>
<feature type="helix" evidence="8">
    <location>
        <begin position="285"/>
        <end position="288"/>
    </location>
</feature>
<feature type="helix" evidence="8">
    <location>
        <begin position="289"/>
        <end position="291"/>
    </location>
</feature>
<sequence length="330" mass="35248">MTPNSTGEVPSPIPKGALGLSLALASLIITANLLLALGIAWDRRLRSPPAGCFFLSLLLAGLLTGLALPTLPGLWNQSRRGYWSCLLVYLAPNFSFLSLLANLLLVHGERYMAVLRPLQPPGSIRLALLLTWAGPLLFASLPALGWNHWTPGANCSSQAIFPAPYLYLEVYGLLLPAVGAAAFLSVRVLATAHRQLQDICRLERAVCRDEPSALARALTWRQARAQAGAMLLFGLCWGPYVATLLLSVLAYEQRPPLGPGTLLSLLSLGSASAAAVPVAMGLGDQRYTAPWRAAAQRCLQGLWGRASRDSPGPSIAYHPSSQSSVDLDLN</sequence>
<accession>Q8TDU6</accession>
<accession>B3KV35</accession>
<evidence type="ECO:0000255" key="1"/>
<evidence type="ECO:0000255" key="2">
    <source>
        <dbReference type="PROSITE-ProRule" id="PRU00521"/>
    </source>
</evidence>
<evidence type="ECO:0000256" key="3">
    <source>
        <dbReference type="SAM" id="MobiDB-lite"/>
    </source>
</evidence>
<evidence type="ECO:0000269" key="4">
    <source>
    </source>
</evidence>
<evidence type="ECO:0000269" key="5">
    <source>
    </source>
</evidence>
<evidence type="ECO:0000269" key="6">
    <source>
    </source>
</evidence>
<evidence type="ECO:0007829" key="7">
    <source>
        <dbReference type="PDB" id="7CFM"/>
    </source>
</evidence>
<evidence type="ECO:0007829" key="8">
    <source>
        <dbReference type="PDB" id="9GYO"/>
    </source>
</evidence>
<reference key="1">
    <citation type="journal article" date="2002" name="Biochem. Biophys. Res. Commun.">
        <title>Identification of membrane-type receptor for bile acids (M-BAR).</title>
        <authorList>
            <person name="Maruyama T."/>
            <person name="Miyamoto Y."/>
            <person name="Nakamura T."/>
            <person name="Tamai Y."/>
            <person name="Okada H."/>
            <person name="Sugiyama E."/>
            <person name="Nakamura T."/>
            <person name="Itadani H."/>
            <person name="Tanaka K."/>
        </authorList>
    </citation>
    <scope>NUCLEOTIDE SEQUENCE [MRNA]</scope>
    <scope>FUNCTION</scope>
    <scope>TISSUE SPECIFICITY</scope>
</reference>
<reference key="2">
    <citation type="journal article" date="2003" name="J. Biol. Chem.">
        <title>A G protein-coupled receptor responsive to bile acids.</title>
        <authorList>
            <person name="Kawamata Y."/>
            <person name="Fujii R."/>
            <person name="Hosoya M."/>
            <person name="Harada M."/>
            <person name="Yoshida H."/>
            <person name="Miwa M."/>
            <person name="Fukusumi S."/>
            <person name="Habata Y."/>
            <person name="Itoh T."/>
            <person name="Shintani Y."/>
            <person name="Hinuma S."/>
            <person name="Fujisawa Y."/>
            <person name="Fujino M."/>
        </authorList>
    </citation>
    <scope>NUCLEOTIDE SEQUENCE [MRNA]</scope>
    <scope>FUNCTION</scope>
    <scope>SUBCELLULAR LOCATION</scope>
    <scope>TISSUE SPECIFICITY</scope>
</reference>
<reference key="3">
    <citation type="journal article" date="2002" name="FEBS Lett.">
        <title>Identification of G protein-coupled receptor genes from the human genome sequence.</title>
        <authorList>
            <person name="Takeda S."/>
            <person name="Kadowaki S."/>
            <person name="Haga T."/>
            <person name="Takaesu H."/>
            <person name="Mitaku S."/>
        </authorList>
    </citation>
    <scope>NUCLEOTIDE SEQUENCE [LARGE SCALE GENOMIC DNA]</scope>
    <scope>TISSUE SPECIFICITY</scope>
</reference>
<reference key="4">
    <citation type="journal article" date="2004" name="Nat. Genet.">
        <title>Complete sequencing and characterization of 21,243 full-length human cDNAs.</title>
        <authorList>
            <person name="Ota T."/>
            <person name="Suzuki Y."/>
            <person name="Nishikawa T."/>
            <person name="Otsuki T."/>
            <person name="Sugiyama T."/>
            <person name="Irie R."/>
            <person name="Wakamatsu A."/>
            <person name="Hayashi K."/>
            <person name="Sato H."/>
            <person name="Nagai K."/>
            <person name="Kimura K."/>
            <person name="Makita H."/>
            <person name="Sekine M."/>
            <person name="Obayashi M."/>
            <person name="Nishi T."/>
            <person name="Shibahara T."/>
            <person name="Tanaka T."/>
            <person name="Ishii S."/>
            <person name="Yamamoto J."/>
            <person name="Saito K."/>
            <person name="Kawai Y."/>
            <person name="Isono Y."/>
            <person name="Nakamura Y."/>
            <person name="Nagahari K."/>
            <person name="Murakami K."/>
            <person name="Yasuda T."/>
            <person name="Iwayanagi T."/>
            <person name="Wagatsuma M."/>
            <person name="Shiratori A."/>
            <person name="Sudo H."/>
            <person name="Hosoiri T."/>
            <person name="Kaku Y."/>
            <person name="Kodaira H."/>
            <person name="Kondo H."/>
            <person name="Sugawara M."/>
            <person name="Takahashi M."/>
            <person name="Kanda K."/>
            <person name="Yokoi T."/>
            <person name="Furuya T."/>
            <person name="Kikkawa E."/>
            <person name="Omura Y."/>
            <person name="Abe K."/>
            <person name="Kamihara K."/>
            <person name="Katsuta N."/>
            <person name="Sato K."/>
            <person name="Tanikawa M."/>
            <person name="Yamazaki M."/>
            <person name="Ninomiya K."/>
            <person name="Ishibashi T."/>
            <person name="Yamashita H."/>
            <person name="Murakawa K."/>
            <person name="Fujimori K."/>
            <person name="Tanai H."/>
            <person name="Kimata M."/>
            <person name="Watanabe M."/>
            <person name="Hiraoka S."/>
            <person name="Chiba Y."/>
            <person name="Ishida S."/>
            <person name="Ono Y."/>
            <person name="Takiguchi S."/>
            <person name="Watanabe S."/>
            <person name="Yosida M."/>
            <person name="Hotuta T."/>
            <person name="Kusano J."/>
            <person name="Kanehori K."/>
            <person name="Takahashi-Fujii A."/>
            <person name="Hara H."/>
            <person name="Tanase T.-O."/>
            <person name="Nomura Y."/>
            <person name="Togiya S."/>
            <person name="Komai F."/>
            <person name="Hara R."/>
            <person name="Takeuchi K."/>
            <person name="Arita M."/>
            <person name="Imose N."/>
            <person name="Musashino K."/>
            <person name="Yuuki H."/>
            <person name="Oshima A."/>
            <person name="Sasaki N."/>
            <person name="Aotsuka S."/>
            <person name="Yoshikawa Y."/>
            <person name="Matsunawa H."/>
            <person name="Ichihara T."/>
            <person name="Shiohata N."/>
            <person name="Sano S."/>
            <person name="Moriya S."/>
            <person name="Momiyama H."/>
            <person name="Satoh N."/>
            <person name="Takami S."/>
            <person name="Terashima Y."/>
            <person name="Suzuki O."/>
            <person name="Nakagawa S."/>
            <person name="Senoh A."/>
            <person name="Mizoguchi H."/>
            <person name="Goto Y."/>
            <person name="Shimizu F."/>
            <person name="Wakebe H."/>
            <person name="Hishigaki H."/>
            <person name="Watanabe T."/>
            <person name="Sugiyama A."/>
            <person name="Takemoto M."/>
            <person name="Kawakami B."/>
            <person name="Yamazaki M."/>
            <person name="Watanabe K."/>
            <person name="Kumagai A."/>
            <person name="Itakura S."/>
            <person name="Fukuzumi Y."/>
            <person name="Fujimori Y."/>
            <person name="Komiyama M."/>
            <person name="Tashiro H."/>
            <person name="Tanigami A."/>
            <person name="Fujiwara T."/>
            <person name="Ono T."/>
            <person name="Yamada K."/>
            <person name="Fujii Y."/>
            <person name="Ozaki K."/>
            <person name="Hirao M."/>
            <person name="Ohmori Y."/>
            <person name="Kawabata A."/>
            <person name="Hikiji T."/>
            <person name="Kobatake N."/>
            <person name="Inagaki H."/>
            <person name="Ikema Y."/>
            <person name="Okamoto S."/>
            <person name="Okitani R."/>
            <person name="Kawakami T."/>
            <person name="Noguchi S."/>
            <person name="Itoh T."/>
            <person name="Shigeta K."/>
            <person name="Senba T."/>
            <person name="Matsumura K."/>
            <person name="Nakajima Y."/>
            <person name="Mizuno T."/>
            <person name="Morinaga M."/>
            <person name="Sasaki M."/>
            <person name="Togashi T."/>
            <person name="Oyama M."/>
            <person name="Hata H."/>
            <person name="Watanabe M."/>
            <person name="Komatsu T."/>
            <person name="Mizushima-Sugano J."/>
            <person name="Satoh T."/>
            <person name="Shirai Y."/>
            <person name="Takahashi Y."/>
            <person name="Nakagawa K."/>
            <person name="Okumura K."/>
            <person name="Nagase T."/>
            <person name="Nomura N."/>
            <person name="Kikuchi H."/>
            <person name="Masuho Y."/>
            <person name="Yamashita R."/>
            <person name="Nakai K."/>
            <person name="Yada T."/>
            <person name="Nakamura Y."/>
            <person name="Ohara O."/>
            <person name="Isogai T."/>
            <person name="Sugano S."/>
        </authorList>
    </citation>
    <scope>NUCLEOTIDE SEQUENCE [LARGE SCALE MRNA]</scope>
    <source>
        <tissue>Placenta</tissue>
        <tissue>Spleen</tissue>
    </source>
</reference>
<reference key="5">
    <citation type="submission" date="2005-07" db="EMBL/GenBank/DDBJ databases">
        <authorList>
            <person name="Mural R.J."/>
            <person name="Istrail S."/>
            <person name="Sutton G."/>
            <person name="Florea L."/>
            <person name="Halpern A.L."/>
            <person name="Mobarry C.M."/>
            <person name="Lippert R."/>
            <person name="Walenz B."/>
            <person name="Shatkay H."/>
            <person name="Dew I."/>
            <person name="Miller J.R."/>
            <person name="Flanigan M.J."/>
            <person name="Edwards N.J."/>
            <person name="Bolanos R."/>
            <person name="Fasulo D."/>
            <person name="Halldorsson B.V."/>
            <person name="Hannenhalli S."/>
            <person name="Turner R."/>
            <person name="Yooseph S."/>
            <person name="Lu F."/>
            <person name="Nusskern D.R."/>
            <person name="Shue B.C."/>
            <person name="Zheng X.H."/>
            <person name="Zhong F."/>
            <person name="Delcher A.L."/>
            <person name="Huson D.H."/>
            <person name="Kravitz S.A."/>
            <person name="Mouchard L."/>
            <person name="Reinert K."/>
            <person name="Remington K.A."/>
            <person name="Clark A.G."/>
            <person name="Waterman M.S."/>
            <person name="Eichler E.E."/>
            <person name="Adams M.D."/>
            <person name="Hunkapiller M.W."/>
            <person name="Myers E.W."/>
            <person name="Venter J.C."/>
        </authorList>
    </citation>
    <scope>NUCLEOTIDE SEQUENCE [LARGE SCALE GENOMIC DNA]</scope>
</reference>
<reference key="6">
    <citation type="journal article" date="2004" name="Genome Res.">
        <title>The status, quality, and expansion of the NIH full-length cDNA project: the Mammalian Gene Collection (MGC).</title>
        <authorList>
            <consortium name="The MGC Project Team"/>
        </authorList>
    </citation>
    <scope>NUCLEOTIDE SEQUENCE [LARGE SCALE MRNA]</scope>
    <source>
        <tissue>Pancreas</tissue>
    </source>
</reference>
<comment type="function">
    <text evidence="5 6">Receptor for bile acid. Bile acid-binding induces its internalization, activation of extracellular signal-regulated kinase and intracellular cAMP production. May be involved in the suppression of macrophage functions by bile acids.</text>
</comment>
<comment type="interaction">
    <interactant intactId="EBI-2806519">
        <id>Q8TDU6</id>
    </interactant>
    <interactant intactId="EBI-354932">
        <id>P38646</id>
        <label>HSPA9</label>
    </interactant>
    <organismsDiffer>false</organismsDiffer>
    <experiments>3</experiments>
</comment>
<comment type="subcellular location">
    <subcellularLocation>
        <location evidence="6">Cell membrane</location>
        <topology evidence="6">Multi-pass membrane protein</topology>
    </subcellularLocation>
</comment>
<comment type="tissue specificity">
    <text evidence="4 5 6">Ubiquitously expressed. Expressed at higher level in spleen and placenta. Expressed at lower level in other tissues. In digestive tissues, it is expressed in stomach, duodenum, ileocecum, ileum, jejunum, ascending colon, transverse colon, descending colon, cecum and liver, but not in esophagus and rectum.</text>
</comment>
<comment type="similarity">
    <text evidence="2">Belongs to the G-protein coupled receptor 1 family.</text>
</comment>
<proteinExistence type="evidence at protein level"/>
<dbReference type="EMBL" id="AB086170">
    <property type="protein sequence ID" value="BAC65343.1"/>
    <property type="molecule type" value="mRNA"/>
</dbReference>
<dbReference type="EMBL" id="AB089307">
    <property type="protein sequence ID" value="BAC55235.1"/>
    <property type="molecule type" value="mRNA"/>
</dbReference>
<dbReference type="EMBL" id="AB083601">
    <property type="protein sequence ID" value="BAB89314.1"/>
    <property type="molecule type" value="Genomic_DNA"/>
</dbReference>
<dbReference type="EMBL" id="AK122658">
    <property type="protein sequence ID" value="BAG53647.1"/>
    <property type="molecule type" value="mRNA"/>
</dbReference>
<dbReference type="EMBL" id="AK122660">
    <property type="protein sequence ID" value="BAG53648.1"/>
    <property type="molecule type" value="mRNA"/>
</dbReference>
<dbReference type="EMBL" id="CH471063">
    <property type="protein sequence ID" value="EAW70598.1"/>
    <property type="molecule type" value="Genomic_DNA"/>
</dbReference>
<dbReference type="EMBL" id="BC033625">
    <property type="protein sequence ID" value="AAH33625.1"/>
    <property type="molecule type" value="mRNA"/>
</dbReference>
<dbReference type="CCDS" id="CCDS46515.1"/>
<dbReference type="RefSeq" id="NP_001070659.1">
    <property type="nucleotide sequence ID" value="NM_001077191.2"/>
</dbReference>
<dbReference type="RefSeq" id="NP_001070662.1">
    <property type="nucleotide sequence ID" value="NM_001077194.2"/>
</dbReference>
<dbReference type="RefSeq" id="NP_001308879.1">
    <property type="nucleotide sequence ID" value="NM_001321950.2"/>
</dbReference>
<dbReference type="RefSeq" id="NP_733800.1">
    <property type="nucleotide sequence ID" value="NM_170699.3"/>
</dbReference>
<dbReference type="RefSeq" id="XP_011509045.1">
    <property type="nucleotide sequence ID" value="XM_011510743.1"/>
</dbReference>
<dbReference type="RefSeq" id="XP_016858956.1">
    <property type="nucleotide sequence ID" value="XM_017003467.1"/>
</dbReference>
<dbReference type="RefSeq" id="XP_016858957.1">
    <property type="nucleotide sequence ID" value="XM_017003468.1"/>
</dbReference>
<dbReference type="RefSeq" id="XP_016858958.1">
    <property type="nucleotide sequence ID" value="XM_017003469.1"/>
</dbReference>
<dbReference type="RefSeq" id="XP_054196754.1">
    <property type="nucleotide sequence ID" value="XM_054340779.1"/>
</dbReference>
<dbReference type="PDB" id="7BW0">
    <property type="method" value="EM"/>
    <property type="resolution" value="3.90 A"/>
    <property type="chains" value="R=6-307"/>
</dbReference>
<dbReference type="PDB" id="7CFM">
    <property type="method" value="EM"/>
    <property type="resolution" value="3.00 A"/>
    <property type="chains" value="R=1-330"/>
</dbReference>
<dbReference type="PDB" id="7CFN">
    <property type="method" value="EM"/>
    <property type="resolution" value="3.00 A"/>
    <property type="chains" value="R=1-330"/>
</dbReference>
<dbReference type="PDB" id="7XTQ">
    <property type="method" value="EM"/>
    <property type="resolution" value="3.20 A"/>
    <property type="chains" value="R=1-330"/>
</dbReference>
<dbReference type="PDB" id="9GYO">
    <property type="method" value="EM"/>
    <property type="resolution" value="2.50 A"/>
    <property type="chains" value="R=1-330"/>
</dbReference>
<dbReference type="PDBsum" id="7BW0"/>
<dbReference type="PDBsum" id="7CFM"/>
<dbReference type="PDBsum" id="7CFN"/>
<dbReference type="PDBsum" id="7XTQ"/>
<dbReference type="PDBsum" id="9GYO"/>
<dbReference type="EMDB" id="EMD-30221"/>
<dbReference type="EMDB" id="EMD-30344"/>
<dbReference type="EMDB" id="EMD-30345"/>
<dbReference type="EMDB" id="EMD-33452"/>
<dbReference type="EMDB" id="EMD-51700"/>
<dbReference type="SMR" id="Q8TDU6"/>
<dbReference type="BioGRID" id="127367">
    <property type="interactions" value="30"/>
</dbReference>
<dbReference type="FunCoup" id="Q8TDU6">
    <property type="interactions" value="404"/>
</dbReference>
<dbReference type="IntAct" id="Q8TDU6">
    <property type="interactions" value="36"/>
</dbReference>
<dbReference type="MINT" id="Q8TDU6"/>
<dbReference type="STRING" id="9606.ENSP00000430886"/>
<dbReference type="BindingDB" id="Q8TDU6"/>
<dbReference type="ChEMBL" id="CHEMBL5409"/>
<dbReference type="DrugBank" id="DB06777">
    <property type="generic name" value="Chenodeoxycholic acid"/>
</dbReference>
<dbReference type="DrugBank" id="DB02659">
    <property type="generic name" value="Cholic Acid"/>
</dbReference>
<dbReference type="DrugBank" id="DB03619">
    <property type="generic name" value="Deoxycholic acid"/>
</dbReference>
<dbReference type="DrugBank" id="DB04348">
    <property type="generic name" value="Taurocholic acid"/>
</dbReference>
<dbReference type="DrugCentral" id="Q8TDU6"/>
<dbReference type="GuidetoPHARMACOLOGY" id="37"/>
<dbReference type="SwissLipids" id="SLP:000001566"/>
<dbReference type="TCDB" id="9.A.14.21.1">
    <property type="family name" value="the g-protein-coupled receptor (gpcr) family"/>
</dbReference>
<dbReference type="GlyCosmos" id="Q8TDU6">
    <property type="glycosylation" value="2 sites, No reported glycans"/>
</dbReference>
<dbReference type="GlyGen" id="Q8TDU6">
    <property type="glycosylation" value="2 sites"/>
</dbReference>
<dbReference type="iPTMnet" id="Q8TDU6"/>
<dbReference type="PhosphoSitePlus" id="Q8TDU6"/>
<dbReference type="BioMuta" id="GPBAR1"/>
<dbReference type="DMDM" id="74762624"/>
<dbReference type="PaxDb" id="9606-ENSP00000430886"/>
<dbReference type="PeptideAtlas" id="Q8TDU6"/>
<dbReference type="ProteomicsDB" id="74340"/>
<dbReference type="Antibodypedia" id="34258">
    <property type="antibodies" value="301 antibodies from 31 providers"/>
</dbReference>
<dbReference type="DNASU" id="151306"/>
<dbReference type="Ensembl" id="ENST00000479077.5">
    <property type="protein sequence ID" value="ENSP00000430698.1"/>
    <property type="gene ID" value="ENSG00000179921.15"/>
</dbReference>
<dbReference type="Ensembl" id="ENST00000519574.2">
    <property type="protein sequence ID" value="ENSP00000430202.1"/>
    <property type="gene ID" value="ENSG00000179921.15"/>
</dbReference>
<dbReference type="Ensembl" id="ENST00000521462.1">
    <property type="protein sequence ID" value="ENSP00000428824.1"/>
    <property type="gene ID" value="ENSG00000179921.15"/>
</dbReference>
<dbReference type="Ensembl" id="ENST00000522678.5">
    <property type="protein sequence ID" value="ENSP00000430886.1"/>
    <property type="gene ID" value="ENSG00000179921.15"/>
</dbReference>
<dbReference type="GeneID" id="151306"/>
<dbReference type="KEGG" id="hsa:151306"/>
<dbReference type="MANE-Select" id="ENST00000519574.2">
    <property type="protein sequence ID" value="ENSP00000430202.1"/>
    <property type="RefSeq nucleotide sequence ID" value="NM_170699.3"/>
    <property type="RefSeq protein sequence ID" value="NP_733800.1"/>
</dbReference>
<dbReference type="UCSC" id="uc010zjw.1">
    <property type="organism name" value="human"/>
</dbReference>
<dbReference type="AGR" id="HGNC:19680"/>
<dbReference type="CTD" id="151306"/>
<dbReference type="DisGeNET" id="151306"/>
<dbReference type="GeneCards" id="GPBAR1"/>
<dbReference type="HGNC" id="HGNC:19680">
    <property type="gene designation" value="GPBAR1"/>
</dbReference>
<dbReference type="HPA" id="ENSG00000179921">
    <property type="expression patterns" value="Tissue enhanced (adipose tissue, breast, gallbladder)"/>
</dbReference>
<dbReference type="MalaCards" id="GPBAR1"/>
<dbReference type="MIM" id="610147">
    <property type="type" value="gene"/>
</dbReference>
<dbReference type="neXtProt" id="NX_Q8TDU6"/>
<dbReference type="OpenTargets" id="ENSG00000179921"/>
<dbReference type="PharmGKB" id="PA134903170"/>
<dbReference type="VEuPathDB" id="HostDB:ENSG00000179921"/>
<dbReference type="eggNOG" id="ENOG502SQ0C">
    <property type="taxonomic scope" value="Eukaryota"/>
</dbReference>
<dbReference type="GeneTree" id="ENSGT00390000010256"/>
<dbReference type="HOGENOM" id="CLU_895831_0_0_1"/>
<dbReference type="InParanoid" id="Q8TDU6"/>
<dbReference type="OMA" id="ACWVPYL"/>
<dbReference type="OrthoDB" id="8817982at2759"/>
<dbReference type="PAN-GO" id="Q8TDU6">
    <property type="GO annotations" value="3 GO annotations based on evolutionary models"/>
</dbReference>
<dbReference type="PhylomeDB" id="Q8TDU6"/>
<dbReference type="TreeFam" id="TF333321"/>
<dbReference type="PathwayCommons" id="Q8TDU6"/>
<dbReference type="Reactome" id="R-HSA-373076">
    <property type="pathway name" value="Class A/1 (Rhodopsin-like receptors)"/>
</dbReference>
<dbReference type="Reactome" id="R-HSA-418555">
    <property type="pathway name" value="G alpha (s) signalling events"/>
</dbReference>
<dbReference type="SignaLink" id="Q8TDU6"/>
<dbReference type="BioGRID-ORCS" id="151306">
    <property type="hits" value="16 hits in 1144 CRISPR screens"/>
</dbReference>
<dbReference type="GeneWiki" id="G_protein-coupled_bile_acid_receptor"/>
<dbReference type="GenomeRNAi" id="151306"/>
<dbReference type="Pharos" id="Q8TDU6">
    <property type="development level" value="Tchem"/>
</dbReference>
<dbReference type="PRO" id="PR:Q8TDU6"/>
<dbReference type="Proteomes" id="UP000005640">
    <property type="component" value="Chromosome 2"/>
</dbReference>
<dbReference type="RNAct" id="Q8TDU6">
    <property type="molecule type" value="protein"/>
</dbReference>
<dbReference type="Bgee" id="ENSG00000179921">
    <property type="expression patterns" value="Expressed in male germ line stem cell (sensu Vertebrata) in testis and 96 other cell types or tissues"/>
</dbReference>
<dbReference type="GO" id="GO:0005737">
    <property type="term" value="C:cytoplasm"/>
    <property type="evidence" value="ECO:0000314"/>
    <property type="project" value="UniProtKB"/>
</dbReference>
<dbReference type="GO" id="GO:0005886">
    <property type="term" value="C:plasma membrane"/>
    <property type="evidence" value="ECO:0000314"/>
    <property type="project" value="UniProtKB"/>
</dbReference>
<dbReference type="GO" id="GO:0043235">
    <property type="term" value="C:receptor complex"/>
    <property type="evidence" value="ECO:0000314"/>
    <property type="project" value="UniProtKB"/>
</dbReference>
<dbReference type="GO" id="GO:0038182">
    <property type="term" value="F:G protein-coupled bile acid receptor activity"/>
    <property type="evidence" value="ECO:0000314"/>
    <property type="project" value="UniProtKB"/>
</dbReference>
<dbReference type="GO" id="GO:0038184">
    <property type="term" value="P:adenylate cyclase-activating G protein-coupled bile acid receptor signaling pathway"/>
    <property type="evidence" value="ECO:0000314"/>
    <property type="project" value="UniProtKB"/>
</dbReference>
<dbReference type="GO" id="GO:1903413">
    <property type="term" value="P:cellular response to bile acid"/>
    <property type="evidence" value="ECO:0000314"/>
    <property type="project" value="UniProtKB"/>
</dbReference>
<dbReference type="GO" id="GO:0007186">
    <property type="term" value="P:G protein-coupled receptor signaling pathway"/>
    <property type="evidence" value="ECO:0000318"/>
    <property type="project" value="GO_Central"/>
</dbReference>
<dbReference type="GO" id="GO:1904056">
    <property type="term" value="P:positive regulation of cholangiocyte proliferation"/>
    <property type="evidence" value="ECO:0007669"/>
    <property type="project" value="Ensembl"/>
</dbReference>
<dbReference type="GO" id="GO:0070374">
    <property type="term" value="P:positive regulation of ERK1 and ERK2 cascade"/>
    <property type="evidence" value="ECO:0007669"/>
    <property type="project" value="Ensembl"/>
</dbReference>
<dbReference type="GO" id="GO:2000810">
    <property type="term" value="P:regulation of bicellular tight junction assembly"/>
    <property type="evidence" value="ECO:0007669"/>
    <property type="project" value="Ensembl"/>
</dbReference>
<dbReference type="FunFam" id="1.20.1070.10:FF:000307">
    <property type="entry name" value="G-protein coupled bile acid receptor 1"/>
    <property type="match status" value="1"/>
</dbReference>
<dbReference type="Gene3D" id="1.20.1070.10">
    <property type="entry name" value="Rhodopsin 7-helix transmembrane proteins"/>
    <property type="match status" value="1"/>
</dbReference>
<dbReference type="InterPro" id="IPR000276">
    <property type="entry name" value="GPCR_Rhodpsn"/>
</dbReference>
<dbReference type="InterPro" id="IPR017452">
    <property type="entry name" value="GPCR_Rhodpsn_7TM"/>
</dbReference>
<dbReference type="PANTHER" id="PTHR24246:SF31">
    <property type="entry name" value="G-PROTEIN COUPLED BILE ACID RECEPTOR 1"/>
    <property type="match status" value="1"/>
</dbReference>
<dbReference type="PANTHER" id="PTHR24246">
    <property type="entry name" value="OLFACTORY RECEPTOR AND ADENOSINE RECEPTOR"/>
    <property type="match status" value="1"/>
</dbReference>
<dbReference type="Pfam" id="PF00001">
    <property type="entry name" value="7tm_1"/>
    <property type="match status" value="1"/>
</dbReference>
<dbReference type="PRINTS" id="PR00237">
    <property type="entry name" value="GPCRRHODOPSN"/>
</dbReference>
<dbReference type="SUPFAM" id="SSF81321">
    <property type="entry name" value="Family A G protein-coupled receptor-like"/>
    <property type="match status" value="1"/>
</dbReference>
<dbReference type="PROSITE" id="PS50262">
    <property type="entry name" value="G_PROTEIN_RECEP_F1_2"/>
    <property type="match status" value="1"/>
</dbReference>
<protein>
    <recommendedName>
        <fullName>G-protein coupled bile acid receptor 1</fullName>
    </recommendedName>
    <alternativeName>
        <fullName>G-protein coupled receptor GPCR19</fullName>
        <shortName>hGPCR19</shortName>
    </alternativeName>
    <alternativeName>
        <fullName>Membrane-type receptor for bile acids</fullName>
        <shortName>M-BAR</shortName>
    </alternativeName>
    <alternativeName>
        <fullName>hBG37</fullName>
        <shortName>BG37</shortName>
    </alternativeName>
</protein>